<geneLocation type="chloroplast"/>
<comment type="function">
    <text evidence="1">Usually encoded in the trnK tRNA gene intron. Probably assists in splicing its own and other chloroplast group II introns.</text>
</comment>
<comment type="subcellular location">
    <subcellularLocation>
        <location>Plastid</location>
        <location>Chloroplast</location>
    </subcellularLocation>
</comment>
<comment type="similarity">
    <text evidence="1">Belongs to the intron maturase 2 family. MatK subfamily.</text>
</comment>
<organism>
    <name type="scientific">Mentzelia lindleyi</name>
    <name type="common">Blazing star</name>
    <dbReference type="NCBI Taxonomy" id="86878"/>
    <lineage>
        <taxon>Eukaryota</taxon>
        <taxon>Viridiplantae</taxon>
        <taxon>Streptophyta</taxon>
        <taxon>Embryophyta</taxon>
        <taxon>Tracheophyta</taxon>
        <taxon>Spermatophyta</taxon>
        <taxon>Magnoliopsida</taxon>
        <taxon>eudicotyledons</taxon>
        <taxon>Gunneridae</taxon>
        <taxon>Pentapetalae</taxon>
        <taxon>asterids</taxon>
        <taxon>Cornales</taxon>
        <taxon>Loasaceae</taxon>
        <taxon>Mentzelia</taxon>
    </lineage>
</organism>
<dbReference type="EMBL" id="AF503307">
    <property type="protein sequence ID" value="AAM54514.1"/>
    <property type="molecule type" value="Genomic_DNA"/>
</dbReference>
<dbReference type="SMR" id="Q7HUK6"/>
<dbReference type="GO" id="GO:0009507">
    <property type="term" value="C:chloroplast"/>
    <property type="evidence" value="ECO:0007669"/>
    <property type="project" value="UniProtKB-SubCell"/>
</dbReference>
<dbReference type="GO" id="GO:0003723">
    <property type="term" value="F:RNA binding"/>
    <property type="evidence" value="ECO:0007669"/>
    <property type="project" value="UniProtKB-KW"/>
</dbReference>
<dbReference type="GO" id="GO:0006397">
    <property type="term" value="P:mRNA processing"/>
    <property type="evidence" value="ECO:0007669"/>
    <property type="project" value="UniProtKB-KW"/>
</dbReference>
<dbReference type="GO" id="GO:0008380">
    <property type="term" value="P:RNA splicing"/>
    <property type="evidence" value="ECO:0007669"/>
    <property type="project" value="UniProtKB-UniRule"/>
</dbReference>
<dbReference type="GO" id="GO:0008033">
    <property type="term" value="P:tRNA processing"/>
    <property type="evidence" value="ECO:0007669"/>
    <property type="project" value="UniProtKB-KW"/>
</dbReference>
<dbReference type="HAMAP" id="MF_01390">
    <property type="entry name" value="MatK"/>
    <property type="match status" value="1"/>
</dbReference>
<dbReference type="InterPro" id="IPR024937">
    <property type="entry name" value="Domain_X"/>
</dbReference>
<dbReference type="InterPro" id="IPR002866">
    <property type="entry name" value="Maturase_MatK"/>
</dbReference>
<dbReference type="InterPro" id="IPR024942">
    <property type="entry name" value="Maturase_MatK_N"/>
</dbReference>
<dbReference type="PANTHER" id="PTHR34811">
    <property type="entry name" value="MATURASE K"/>
    <property type="match status" value="1"/>
</dbReference>
<dbReference type="PANTHER" id="PTHR34811:SF1">
    <property type="entry name" value="MATURASE K"/>
    <property type="match status" value="1"/>
</dbReference>
<dbReference type="Pfam" id="PF01348">
    <property type="entry name" value="Intron_maturas2"/>
    <property type="match status" value="1"/>
</dbReference>
<dbReference type="Pfam" id="PF01824">
    <property type="entry name" value="MatK_N"/>
    <property type="match status" value="1"/>
</dbReference>
<feature type="chain" id="PRO_0000143518" description="Maturase K">
    <location>
        <begin position="1"/>
        <end position="506"/>
    </location>
</feature>
<protein>
    <recommendedName>
        <fullName evidence="1">Maturase K</fullName>
    </recommendedName>
    <alternativeName>
        <fullName evidence="1">Intron maturase</fullName>
    </alternativeName>
</protein>
<accession>Q7HUK6</accession>
<evidence type="ECO:0000255" key="1">
    <source>
        <dbReference type="HAMAP-Rule" id="MF_01390"/>
    </source>
</evidence>
<proteinExistence type="inferred from homology"/>
<keyword id="KW-0150">Chloroplast</keyword>
<keyword id="KW-0507">mRNA processing</keyword>
<keyword id="KW-0934">Plastid</keyword>
<keyword id="KW-0694">RNA-binding</keyword>
<keyword id="KW-0819">tRNA processing</keyword>
<gene>
    <name evidence="1" type="primary">matK</name>
</gene>
<sequence length="506" mass="59834">MEEFQRYFELDRYQQHDFLYPLIFQEYIYALAHDHGLNRSILLENAGYDKKSSLLIVKRLITRMYQQNHLIISANDSNQNPFLGHNKNLYSQMISEGFAVIVEIPFSLRLRSSLEGKEIVKSHNLQSIHSIFPFLEDKFLHLNYVLDILIPYPIHLEILVQTLRHWVKDASSLHLLRFFIHEYRNWNSLITPKRPSAHFSKRNQRLFLFLYNSHVCEYESIFIFLLTQSSHLRSTSSGVLLERIYFYGKLEHSVEVCAKDFKAILWLFKDPFIHYLRYQGKSILTSKGTSLLMNKWKYYLLNCWQCHFYVWSQPRRIYINQLSNHSLDFLGYLSSVRLNPSMVRSQMLENSFLIDNAIKKFDTIVPIIPMIGSLAKAKFCNVLGHPISKPVWADLSDSDIIDRFGRICRNLSHYHSGSSKKKTLYRIKYILRLSCARTLARKHKSTVRAFLKRVGSELLEEFFTEEEQVLSLTFPRAFSTSTSRGLYRRRIWYLDIICINDLANHE</sequence>
<reference key="1">
    <citation type="journal article" date="2001" name="Am. J. Bot.">
        <title>Phylogenetic relationships of Loasaceae subfamily Gronovioideae inferred from matK and ITS sequence data.</title>
        <authorList>
            <person name="Moody M.L."/>
            <person name="Hufford L."/>
            <person name="Soltis D.E."/>
            <person name="Soltis P.S."/>
        </authorList>
    </citation>
    <scope>NUCLEOTIDE SEQUENCE [GENOMIC DNA]</scope>
</reference>
<name>MATK_MENLI</name>